<sequence length="141" mass="15194">VLSSADKANIKATWDKIGGHGGEYGAEALERTFLCFPTTKTYFPHFDLSHGSAQVKAHGKKVADALALAAAHLDDLPSALSALSDLHAYKLRVDPVNFKLLSHCLLVTLAAHHPAEFTPAVHSDLDKFLSSVSTVLTSKYR</sequence>
<gene>
    <name type="primary">HBA</name>
</gene>
<feature type="chain" id="PRO_0000052609" description="Hemoglobin subunit alpha">
    <location>
        <begin position="1"/>
        <end position="141"/>
    </location>
</feature>
<feature type="peptide" id="PRO_0000455861" description="Hemopressin" evidence="2">
    <location>
        <begin position="95"/>
        <end position="103"/>
    </location>
</feature>
<feature type="domain" description="Globin" evidence="4">
    <location>
        <begin position="1"/>
        <end position="141"/>
    </location>
</feature>
<feature type="binding site" evidence="4">
    <location>
        <position position="58"/>
    </location>
    <ligand>
        <name>O2</name>
        <dbReference type="ChEBI" id="CHEBI:15379"/>
    </ligand>
</feature>
<feature type="binding site" description="proximal binding residue" evidence="4">
    <location>
        <position position="87"/>
    </location>
    <ligand>
        <name>heme b</name>
        <dbReference type="ChEBI" id="CHEBI:60344"/>
    </ligand>
    <ligandPart>
        <name>Fe</name>
        <dbReference type="ChEBI" id="CHEBI:18248"/>
    </ligandPart>
</feature>
<feature type="modified residue" description="Phosphoserine" evidence="3">
    <location>
        <position position="3"/>
    </location>
</feature>
<feature type="modified residue" description="N6-succinyllysine" evidence="1">
    <location>
        <position position="7"/>
    </location>
</feature>
<feature type="modified residue" description="N6-succinyllysine" evidence="1">
    <location>
        <position position="11"/>
    </location>
</feature>
<feature type="modified residue" description="N6-acetyllysine; alternate" evidence="3">
    <location>
        <position position="16"/>
    </location>
</feature>
<feature type="modified residue" description="N6-succinyllysine; alternate" evidence="1">
    <location>
        <position position="16"/>
    </location>
</feature>
<feature type="modified residue" description="Phosphotyrosine" evidence="3">
    <location>
        <position position="24"/>
    </location>
</feature>
<feature type="modified residue" description="N6-succinyllysine" evidence="1">
    <location>
        <position position="40"/>
    </location>
</feature>
<feature type="modified residue" description="Phosphoserine" evidence="3">
    <location>
        <position position="49"/>
    </location>
</feature>
<feature type="modified residue" description="Phosphoserine" evidence="1">
    <location>
        <position position="102"/>
    </location>
</feature>
<feature type="modified residue" description="Phosphothreonine" evidence="1">
    <location>
        <position position="108"/>
    </location>
</feature>
<feature type="modified residue" description="Phosphoserine" evidence="1">
    <location>
        <position position="131"/>
    </location>
</feature>
<feature type="modified residue" description="Phosphothreonine" evidence="1">
    <location>
        <position position="134"/>
    </location>
</feature>
<feature type="modified residue" description="Phosphothreonine" evidence="1">
    <location>
        <position position="137"/>
    </location>
</feature>
<feature type="modified residue" description="Phosphoserine" evidence="1">
    <location>
        <position position="138"/>
    </location>
</feature>
<dbReference type="PIR" id="S04220">
    <property type="entry name" value="HAHZS"/>
</dbReference>
<dbReference type="SMR" id="P18973"/>
<dbReference type="GO" id="GO:0072562">
    <property type="term" value="C:blood microparticle"/>
    <property type="evidence" value="ECO:0007669"/>
    <property type="project" value="TreeGrafter"/>
</dbReference>
<dbReference type="GO" id="GO:0031838">
    <property type="term" value="C:haptoglobin-hemoglobin complex"/>
    <property type="evidence" value="ECO:0007669"/>
    <property type="project" value="TreeGrafter"/>
</dbReference>
<dbReference type="GO" id="GO:0005833">
    <property type="term" value="C:hemoglobin complex"/>
    <property type="evidence" value="ECO:0007669"/>
    <property type="project" value="InterPro"/>
</dbReference>
<dbReference type="GO" id="GO:0031720">
    <property type="term" value="F:haptoglobin binding"/>
    <property type="evidence" value="ECO:0007669"/>
    <property type="project" value="TreeGrafter"/>
</dbReference>
<dbReference type="GO" id="GO:0020037">
    <property type="term" value="F:heme binding"/>
    <property type="evidence" value="ECO:0007669"/>
    <property type="project" value="InterPro"/>
</dbReference>
<dbReference type="GO" id="GO:0005506">
    <property type="term" value="F:iron ion binding"/>
    <property type="evidence" value="ECO:0007669"/>
    <property type="project" value="InterPro"/>
</dbReference>
<dbReference type="GO" id="GO:0043177">
    <property type="term" value="F:organic acid binding"/>
    <property type="evidence" value="ECO:0007669"/>
    <property type="project" value="TreeGrafter"/>
</dbReference>
<dbReference type="GO" id="GO:0019825">
    <property type="term" value="F:oxygen binding"/>
    <property type="evidence" value="ECO:0007669"/>
    <property type="project" value="InterPro"/>
</dbReference>
<dbReference type="GO" id="GO:0005344">
    <property type="term" value="F:oxygen carrier activity"/>
    <property type="evidence" value="ECO:0007669"/>
    <property type="project" value="UniProtKB-KW"/>
</dbReference>
<dbReference type="GO" id="GO:0004601">
    <property type="term" value="F:peroxidase activity"/>
    <property type="evidence" value="ECO:0007669"/>
    <property type="project" value="TreeGrafter"/>
</dbReference>
<dbReference type="GO" id="GO:0042744">
    <property type="term" value="P:hydrogen peroxide catabolic process"/>
    <property type="evidence" value="ECO:0007669"/>
    <property type="project" value="TreeGrafter"/>
</dbReference>
<dbReference type="CDD" id="cd08927">
    <property type="entry name" value="Hb-alpha-like"/>
    <property type="match status" value="1"/>
</dbReference>
<dbReference type="FunFam" id="1.10.490.10:FF:000002">
    <property type="entry name" value="Hemoglobin subunit alpha"/>
    <property type="match status" value="1"/>
</dbReference>
<dbReference type="Gene3D" id="1.10.490.10">
    <property type="entry name" value="Globins"/>
    <property type="match status" value="1"/>
</dbReference>
<dbReference type="InterPro" id="IPR000971">
    <property type="entry name" value="Globin"/>
</dbReference>
<dbReference type="InterPro" id="IPR009050">
    <property type="entry name" value="Globin-like_sf"/>
</dbReference>
<dbReference type="InterPro" id="IPR012292">
    <property type="entry name" value="Globin/Proto"/>
</dbReference>
<dbReference type="InterPro" id="IPR002338">
    <property type="entry name" value="Hemoglobin_a-typ"/>
</dbReference>
<dbReference type="InterPro" id="IPR050056">
    <property type="entry name" value="Hemoglobin_oxygen_transport"/>
</dbReference>
<dbReference type="InterPro" id="IPR002339">
    <property type="entry name" value="Hemoglobin_pi"/>
</dbReference>
<dbReference type="PANTHER" id="PTHR11442">
    <property type="entry name" value="HEMOGLOBIN FAMILY MEMBER"/>
    <property type="match status" value="1"/>
</dbReference>
<dbReference type="PANTHER" id="PTHR11442:SF48">
    <property type="entry name" value="HEMOGLOBIN SUBUNIT ALPHA"/>
    <property type="match status" value="1"/>
</dbReference>
<dbReference type="Pfam" id="PF00042">
    <property type="entry name" value="Globin"/>
    <property type="match status" value="1"/>
</dbReference>
<dbReference type="PRINTS" id="PR00612">
    <property type="entry name" value="ALPHAHAEM"/>
</dbReference>
<dbReference type="PRINTS" id="PR00815">
    <property type="entry name" value="PIHAEM"/>
</dbReference>
<dbReference type="SUPFAM" id="SSF46458">
    <property type="entry name" value="Globin-like"/>
    <property type="match status" value="1"/>
</dbReference>
<dbReference type="PROSITE" id="PS01033">
    <property type="entry name" value="GLOBIN"/>
    <property type="match status" value="1"/>
</dbReference>
<keyword id="KW-0007">Acetylation</keyword>
<keyword id="KW-0903">Direct protein sequencing</keyword>
<keyword id="KW-0349">Heme</keyword>
<keyword id="KW-0408">Iron</keyword>
<keyword id="KW-0479">Metal-binding</keyword>
<keyword id="KW-0561">Oxygen transport</keyword>
<keyword id="KW-0597">Phosphoprotein</keyword>
<keyword id="KW-0813">Transport</keyword>
<organism>
    <name type="scientific">Crocuta crocuta</name>
    <name type="common">Spotted hyena</name>
    <dbReference type="NCBI Taxonomy" id="9678"/>
    <lineage>
        <taxon>Eukaryota</taxon>
        <taxon>Metazoa</taxon>
        <taxon>Chordata</taxon>
        <taxon>Craniata</taxon>
        <taxon>Vertebrata</taxon>
        <taxon>Euteleostomi</taxon>
        <taxon>Mammalia</taxon>
        <taxon>Eutheria</taxon>
        <taxon>Laurasiatheria</taxon>
        <taxon>Carnivora</taxon>
        <taxon>Feliformia</taxon>
        <taxon>Hyaenidae</taxon>
        <taxon>Crocuta</taxon>
    </lineage>
</organism>
<protein>
    <recommendedName>
        <fullName>Hemoglobin subunit alpha</fullName>
    </recommendedName>
    <alternativeName>
        <fullName>Alpha-globin</fullName>
    </alternativeName>
    <alternativeName>
        <fullName>Hemoglobin alpha chain</fullName>
    </alternativeName>
    <component>
        <recommendedName>
            <fullName evidence="2">Hemopressin</fullName>
        </recommendedName>
    </component>
</protein>
<accession>P18973</accession>
<name>HBA_CROCR</name>
<proteinExistence type="evidence at protein level"/>
<reference key="1">
    <citation type="journal article" date="1989" name="Biol. Chem. Hoppe-Seyler">
        <title>Carnivora: primary structure of the hemoglobin from the spotted hyena (Crocuta crocuta, Hyenidae).</title>
        <authorList>
            <person name="He C."/>
            <person name="Rodewald K."/>
            <person name="Braunitzer G."/>
            <person name="Goeltenboth R."/>
        </authorList>
    </citation>
    <scope>PROTEIN SEQUENCE</scope>
</reference>
<evidence type="ECO:0000250" key="1">
    <source>
        <dbReference type="UniProtKB" id="P01942"/>
    </source>
</evidence>
<evidence type="ECO:0000250" key="2">
    <source>
        <dbReference type="UniProtKB" id="P01946"/>
    </source>
</evidence>
<evidence type="ECO:0000250" key="3">
    <source>
        <dbReference type="UniProtKB" id="P69905"/>
    </source>
</evidence>
<evidence type="ECO:0000255" key="4">
    <source>
        <dbReference type="PROSITE-ProRule" id="PRU00238"/>
    </source>
</evidence>
<comment type="function">
    <text>Involved in oxygen transport from the lung to the various peripheral tissues.</text>
</comment>
<comment type="function">
    <molecule>Hemopressin</molecule>
    <text evidence="2">Hemopressin acts as an antagonist peptide of the cannabinoid receptor CNR1. Hemopressin-binding efficiently blocks cannabinoid receptor CNR1 and subsequent signaling.</text>
</comment>
<comment type="subunit">
    <text>Heterotetramer of two alpha chains and two beta chains.</text>
</comment>
<comment type="tissue specificity">
    <text>Red blood cells.</text>
</comment>
<comment type="similarity">
    <text evidence="4">Belongs to the globin family.</text>
</comment>